<proteinExistence type="inferred from homology"/>
<accession>Q4KK04</accession>
<keyword id="KW-0143">Chaperone</keyword>
<keyword id="KW-0963">Cytoplasm</keyword>
<keyword id="KW-1015">Disulfide bond</keyword>
<keyword id="KW-0676">Redox-active center</keyword>
<keyword id="KW-0862">Zinc</keyword>
<name>HSLO_PSEF5</name>
<dbReference type="EMBL" id="CP000076">
    <property type="protein sequence ID" value="AAY95694.1"/>
    <property type="molecule type" value="Genomic_DNA"/>
</dbReference>
<dbReference type="RefSeq" id="WP_011058661.1">
    <property type="nucleotide sequence ID" value="NC_004129.6"/>
</dbReference>
<dbReference type="SMR" id="Q4KK04"/>
<dbReference type="STRING" id="220664.PFL_0283"/>
<dbReference type="GeneID" id="57473271"/>
<dbReference type="KEGG" id="pfl:PFL_0283"/>
<dbReference type="PATRIC" id="fig|220664.5.peg.289"/>
<dbReference type="eggNOG" id="COG1281">
    <property type="taxonomic scope" value="Bacteria"/>
</dbReference>
<dbReference type="HOGENOM" id="CLU_054493_0_0_6"/>
<dbReference type="Proteomes" id="UP000008540">
    <property type="component" value="Chromosome"/>
</dbReference>
<dbReference type="GO" id="GO:0005737">
    <property type="term" value="C:cytoplasm"/>
    <property type="evidence" value="ECO:0007669"/>
    <property type="project" value="UniProtKB-SubCell"/>
</dbReference>
<dbReference type="GO" id="GO:0044183">
    <property type="term" value="F:protein folding chaperone"/>
    <property type="evidence" value="ECO:0007669"/>
    <property type="project" value="TreeGrafter"/>
</dbReference>
<dbReference type="GO" id="GO:0051082">
    <property type="term" value="F:unfolded protein binding"/>
    <property type="evidence" value="ECO:0007669"/>
    <property type="project" value="UniProtKB-UniRule"/>
</dbReference>
<dbReference type="GO" id="GO:0042026">
    <property type="term" value="P:protein refolding"/>
    <property type="evidence" value="ECO:0007669"/>
    <property type="project" value="TreeGrafter"/>
</dbReference>
<dbReference type="CDD" id="cd00498">
    <property type="entry name" value="Hsp33"/>
    <property type="match status" value="1"/>
</dbReference>
<dbReference type="Gene3D" id="1.10.287.480">
    <property type="entry name" value="helix hairpin bin"/>
    <property type="match status" value="1"/>
</dbReference>
<dbReference type="Gene3D" id="3.55.30.10">
    <property type="entry name" value="Hsp33 domain"/>
    <property type="match status" value="1"/>
</dbReference>
<dbReference type="Gene3D" id="3.90.1280.10">
    <property type="entry name" value="HSP33 redox switch-like"/>
    <property type="match status" value="1"/>
</dbReference>
<dbReference type="HAMAP" id="MF_00117">
    <property type="entry name" value="HslO"/>
    <property type="match status" value="1"/>
</dbReference>
<dbReference type="InterPro" id="IPR000397">
    <property type="entry name" value="Heat_shock_Hsp33"/>
</dbReference>
<dbReference type="InterPro" id="IPR016154">
    <property type="entry name" value="Heat_shock_Hsp33_C"/>
</dbReference>
<dbReference type="InterPro" id="IPR016153">
    <property type="entry name" value="Heat_shock_Hsp33_N"/>
</dbReference>
<dbReference type="InterPro" id="IPR023212">
    <property type="entry name" value="Hsp33_helix_hairpin_bin_dom_sf"/>
</dbReference>
<dbReference type="NCBIfam" id="NF001033">
    <property type="entry name" value="PRK00114.1"/>
    <property type="match status" value="1"/>
</dbReference>
<dbReference type="PANTHER" id="PTHR30111">
    <property type="entry name" value="33 KDA CHAPERONIN"/>
    <property type="match status" value="1"/>
</dbReference>
<dbReference type="PANTHER" id="PTHR30111:SF1">
    <property type="entry name" value="33 KDA CHAPERONIN"/>
    <property type="match status" value="1"/>
</dbReference>
<dbReference type="Pfam" id="PF01430">
    <property type="entry name" value="HSP33"/>
    <property type="match status" value="1"/>
</dbReference>
<dbReference type="PIRSF" id="PIRSF005261">
    <property type="entry name" value="Heat_shock_Hsp33"/>
    <property type="match status" value="1"/>
</dbReference>
<dbReference type="SUPFAM" id="SSF64397">
    <property type="entry name" value="Hsp33 domain"/>
    <property type="match status" value="1"/>
</dbReference>
<dbReference type="SUPFAM" id="SSF118352">
    <property type="entry name" value="HSP33 redox switch-like"/>
    <property type="match status" value="1"/>
</dbReference>
<evidence type="ECO:0000255" key="1">
    <source>
        <dbReference type="HAMAP-Rule" id="MF_00117"/>
    </source>
</evidence>
<protein>
    <recommendedName>
        <fullName evidence="1">33 kDa chaperonin</fullName>
    </recommendedName>
    <alternativeName>
        <fullName evidence="1">Heat shock protein 33 homolog</fullName>
        <shortName evidence="1">HSP33</shortName>
    </alternativeName>
</protein>
<gene>
    <name evidence="1" type="primary">hslO</name>
    <name type="ordered locus">PFL_0283</name>
</gene>
<reference key="1">
    <citation type="journal article" date="2005" name="Nat. Biotechnol.">
        <title>Complete genome sequence of the plant commensal Pseudomonas fluorescens Pf-5.</title>
        <authorList>
            <person name="Paulsen I.T."/>
            <person name="Press C.M."/>
            <person name="Ravel J."/>
            <person name="Kobayashi D.Y."/>
            <person name="Myers G.S.A."/>
            <person name="Mavrodi D.V."/>
            <person name="DeBoy R.T."/>
            <person name="Seshadri R."/>
            <person name="Ren Q."/>
            <person name="Madupu R."/>
            <person name="Dodson R.J."/>
            <person name="Durkin A.S."/>
            <person name="Brinkac L.M."/>
            <person name="Daugherty S.C."/>
            <person name="Sullivan S.A."/>
            <person name="Rosovitz M.J."/>
            <person name="Gwinn M.L."/>
            <person name="Zhou L."/>
            <person name="Schneider D.J."/>
            <person name="Cartinhour S.W."/>
            <person name="Nelson W.C."/>
            <person name="Weidman J."/>
            <person name="Watkins K."/>
            <person name="Tran K."/>
            <person name="Khouri H."/>
            <person name="Pierson E.A."/>
            <person name="Pierson L.S. III"/>
            <person name="Thomashow L.S."/>
            <person name="Loper J.E."/>
        </authorList>
    </citation>
    <scope>NUCLEOTIDE SEQUENCE [LARGE SCALE GENOMIC DNA]</scope>
    <source>
        <strain>ATCC BAA-477 / NRRL B-23932 / Pf-5</strain>
    </source>
</reference>
<comment type="function">
    <text evidence="1">Redox regulated molecular chaperone. Protects both thermally unfolding and oxidatively damaged proteins from irreversible aggregation. Plays an important role in the bacterial defense system toward oxidative stress.</text>
</comment>
<comment type="subcellular location">
    <subcellularLocation>
        <location evidence="1">Cytoplasm</location>
    </subcellularLocation>
</comment>
<comment type="PTM">
    <text evidence="1">Under oxidizing conditions two disulfide bonds are formed involving the reactive cysteines. Under reducing conditions zinc is bound to the reactive cysteines and the protein is inactive.</text>
</comment>
<comment type="similarity">
    <text evidence="1">Belongs to the HSP33 family.</text>
</comment>
<organism>
    <name type="scientific">Pseudomonas fluorescens (strain ATCC BAA-477 / NRRL B-23932 / Pf-5)</name>
    <dbReference type="NCBI Taxonomy" id="220664"/>
    <lineage>
        <taxon>Bacteria</taxon>
        <taxon>Pseudomonadati</taxon>
        <taxon>Pseudomonadota</taxon>
        <taxon>Gammaproteobacteria</taxon>
        <taxon>Pseudomonadales</taxon>
        <taxon>Pseudomonadaceae</taxon>
        <taxon>Pseudomonas</taxon>
    </lineage>
</organism>
<feature type="chain" id="PRO_0000238083" description="33 kDa chaperonin">
    <location>
        <begin position="1"/>
        <end position="300"/>
    </location>
</feature>
<feature type="disulfide bond" description="Redox-active" evidence="1">
    <location>
        <begin position="235"/>
        <end position="237"/>
    </location>
</feature>
<feature type="disulfide bond" description="Redox-active" evidence="1">
    <location>
        <begin position="269"/>
        <end position="272"/>
    </location>
</feature>
<sequence length="300" mass="33341">MTDLPDTDFTQRFIFDESDTRGELVALERSYAEVLAKHPYPEPVAQLLGELMAAASLLVGTLKFDGLLILQARSEGPVPLLMIECSSEREIRGLARYDAEQIAPDATLADLMPNGVLALTVDPTNGQRYQGIVDLDGTNLAECFTNYFVMSQQTGTRFWLYADGRSARGLLLQQLPADRLRDQEERDASWQHLTALASTLTADELLSLDNETVLHRLYHEEAVRLFDVQPLRFRCSCSRERSGNALVSLGLEDAQQLVVEHGGSIEIDCQFCNERYLFDAADIAQLFAGAGVDTPSDTRH</sequence>